<protein>
    <recommendedName>
        <fullName evidence="1">Serine hydroxymethyltransferase</fullName>
        <shortName evidence="1">SHMT</shortName>
        <shortName evidence="1">Serine methylase</shortName>
        <ecNumber evidence="1">2.1.2.1</ecNumber>
    </recommendedName>
</protein>
<accession>B0T1I5</accession>
<dbReference type="EC" id="2.1.2.1" evidence="1"/>
<dbReference type="EMBL" id="CP000927">
    <property type="protein sequence ID" value="ABZ72174.1"/>
    <property type="molecule type" value="Genomic_DNA"/>
</dbReference>
<dbReference type="SMR" id="B0T1I5"/>
<dbReference type="STRING" id="366602.Caul_3047"/>
<dbReference type="KEGG" id="cak:Caul_3047"/>
<dbReference type="eggNOG" id="COG0112">
    <property type="taxonomic scope" value="Bacteria"/>
</dbReference>
<dbReference type="HOGENOM" id="CLU_022477_2_1_5"/>
<dbReference type="OrthoDB" id="9803846at2"/>
<dbReference type="UniPathway" id="UPA00193"/>
<dbReference type="UniPathway" id="UPA00288">
    <property type="reaction ID" value="UER01023"/>
</dbReference>
<dbReference type="GO" id="GO:0005829">
    <property type="term" value="C:cytosol"/>
    <property type="evidence" value="ECO:0007669"/>
    <property type="project" value="TreeGrafter"/>
</dbReference>
<dbReference type="GO" id="GO:0004372">
    <property type="term" value="F:glycine hydroxymethyltransferase activity"/>
    <property type="evidence" value="ECO:0007669"/>
    <property type="project" value="UniProtKB-UniRule"/>
</dbReference>
<dbReference type="GO" id="GO:0030170">
    <property type="term" value="F:pyridoxal phosphate binding"/>
    <property type="evidence" value="ECO:0007669"/>
    <property type="project" value="UniProtKB-UniRule"/>
</dbReference>
<dbReference type="GO" id="GO:0019264">
    <property type="term" value="P:glycine biosynthetic process from serine"/>
    <property type="evidence" value="ECO:0007669"/>
    <property type="project" value="UniProtKB-UniRule"/>
</dbReference>
<dbReference type="GO" id="GO:0035999">
    <property type="term" value="P:tetrahydrofolate interconversion"/>
    <property type="evidence" value="ECO:0007669"/>
    <property type="project" value="UniProtKB-UniRule"/>
</dbReference>
<dbReference type="CDD" id="cd00378">
    <property type="entry name" value="SHMT"/>
    <property type="match status" value="1"/>
</dbReference>
<dbReference type="FunFam" id="3.40.640.10:FF:000001">
    <property type="entry name" value="Serine hydroxymethyltransferase"/>
    <property type="match status" value="1"/>
</dbReference>
<dbReference type="Gene3D" id="3.90.1150.10">
    <property type="entry name" value="Aspartate Aminotransferase, domain 1"/>
    <property type="match status" value="1"/>
</dbReference>
<dbReference type="Gene3D" id="3.40.640.10">
    <property type="entry name" value="Type I PLP-dependent aspartate aminotransferase-like (Major domain)"/>
    <property type="match status" value="1"/>
</dbReference>
<dbReference type="HAMAP" id="MF_00051">
    <property type="entry name" value="SHMT"/>
    <property type="match status" value="1"/>
</dbReference>
<dbReference type="InterPro" id="IPR015424">
    <property type="entry name" value="PyrdxlP-dep_Trfase"/>
</dbReference>
<dbReference type="InterPro" id="IPR015421">
    <property type="entry name" value="PyrdxlP-dep_Trfase_major"/>
</dbReference>
<dbReference type="InterPro" id="IPR015422">
    <property type="entry name" value="PyrdxlP-dep_Trfase_small"/>
</dbReference>
<dbReference type="InterPro" id="IPR001085">
    <property type="entry name" value="Ser_HO-MeTrfase"/>
</dbReference>
<dbReference type="InterPro" id="IPR049943">
    <property type="entry name" value="Ser_HO-MeTrfase-like"/>
</dbReference>
<dbReference type="InterPro" id="IPR019798">
    <property type="entry name" value="Ser_HO-MeTrfase_PLP_BS"/>
</dbReference>
<dbReference type="InterPro" id="IPR039429">
    <property type="entry name" value="SHMT-like_dom"/>
</dbReference>
<dbReference type="NCBIfam" id="NF000586">
    <property type="entry name" value="PRK00011.1"/>
    <property type="match status" value="1"/>
</dbReference>
<dbReference type="PANTHER" id="PTHR11680">
    <property type="entry name" value="SERINE HYDROXYMETHYLTRANSFERASE"/>
    <property type="match status" value="1"/>
</dbReference>
<dbReference type="PANTHER" id="PTHR11680:SF35">
    <property type="entry name" value="SERINE HYDROXYMETHYLTRANSFERASE 1"/>
    <property type="match status" value="1"/>
</dbReference>
<dbReference type="Pfam" id="PF00464">
    <property type="entry name" value="SHMT"/>
    <property type="match status" value="1"/>
</dbReference>
<dbReference type="PIRSF" id="PIRSF000412">
    <property type="entry name" value="SHMT"/>
    <property type="match status" value="1"/>
</dbReference>
<dbReference type="SUPFAM" id="SSF53383">
    <property type="entry name" value="PLP-dependent transferases"/>
    <property type="match status" value="1"/>
</dbReference>
<dbReference type="PROSITE" id="PS00096">
    <property type="entry name" value="SHMT"/>
    <property type="match status" value="1"/>
</dbReference>
<gene>
    <name evidence="1" type="primary">glyA</name>
    <name type="ordered locus">Caul_3047</name>
</gene>
<organism>
    <name type="scientific">Caulobacter sp. (strain K31)</name>
    <dbReference type="NCBI Taxonomy" id="366602"/>
    <lineage>
        <taxon>Bacteria</taxon>
        <taxon>Pseudomonadati</taxon>
        <taxon>Pseudomonadota</taxon>
        <taxon>Alphaproteobacteria</taxon>
        <taxon>Caulobacterales</taxon>
        <taxon>Caulobacteraceae</taxon>
        <taxon>Caulobacter</taxon>
    </lineage>
</organism>
<name>GLYA_CAUSK</name>
<sequence length="434" mass="45896">MTAPASNITADKNAFFGADLAAADRDIFDRIGLELNRQQNQIELIASENIVSRAVLEAQGSILTNKYAEGYPGKRYYGGCEYVDEIETIAIERAKALFGAGFANVQPHSGSQANQSVFMALLQPGDTFLGMDLAAGGHLTHGSPANQSGKWFKPVSYTVRQQDQLIDYDAVEEVAQASKPKLIIAGGSAYSRQIDFARFRQIADSVGAYLMVDMAHFAGLVAGGVFPSPIPHAHVVTTTTHKTLRGPRGGMVLTNDEAIIKKVNSAVFPGLQGGPLEHVIAAKAVAFGEALQPAFKAYAQAVIDNARALAEALQTQGVNIVSGGTDSHLMLVDLRPKGVTGRDAEHSLERAHMTCNKNGVPFDTASFAVTSGIRLGTPAGTTRGFGAAEFTRVGQLIGEVVNGLAANGVDGNGAVEAKVREEVLALTARFPIYN</sequence>
<feature type="chain" id="PRO_0000369905" description="Serine hydroxymethyltransferase">
    <location>
        <begin position="1"/>
        <end position="434"/>
    </location>
</feature>
<feature type="binding site" evidence="1">
    <location>
        <position position="133"/>
    </location>
    <ligand>
        <name>(6S)-5,6,7,8-tetrahydrofolate</name>
        <dbReference type="ChEBI" id="CHEBI:57453"/>
    </ligand>
</feature>
<feature type="binding site" evidence="1">
    <location>
        <begin position="137"/>
        <end position="139"/>
    </location>
    <ligand>
        <name>(6S)-5,6,7,8-tetrahydrofolate</name>
        <dbReference type="ChEBI" id="CHEBI:57453"/>
    </ligand>
</feature>
<feature type="site" description="Plays an important role in substrate specificity" evidence="1">
    <location>
        <position position="241"/>
    </location>
</feature>
<feature type="modified residue" description="N6-(pyridoxal phosphate)lysine" evidence="1">
    <location>
        <position position="242"/>
    </location>
</feature>
<keyword id="KW-0028">Amino-acid biosynthesis</keyword>
<keyword id="KW-0963">Cytoplasm</keyword>
<keyword id="KW-0554">One-carbon metabolism</keyword>
<keyword id="KW-0663">Pyridoxal phosphate</keyword>
<keyword id="KW-0808">Transferase</keyword>
<evidence type="ECO:0000255" key="1">
    <source>
        <dbReference type="HAMAP-Rule" id="MF_00051"/>
    </source>
</evidence>
<comment type="function">
    <text evidence="1">Catalyzes the reversible interconversion of serine and glycine with tetrahydrofolate (THF) serving as the one-carbon carrier. This reaction serves as the major source of one-carbon groups required for the biosynthesis of purines, thymidylate, methionine, and other important biomolecules. Also exhibits THF-independent aldolase activity toward beta-hydroxyamino acids, producing glycine and aldehydes, via a retro-aldol mechanism.</text>
</comment>
<comment type="catalytic activity">
    <reaction evidence="1">
        <text>(6R)-5,10-methylene-5,6,7,8-tetrahydrofolate + glycine + H2O = (6S)-5,6,7,8-tetrahydrofolate + L-serine</text>
        <dbReference type="Rhea" id="RHEA:15481"/>
        <dbReference type="ChEBI" id="CHEBI:15377"/>
        <dbReference type="ChEBI" id="CHEBI:15636"/>
        <dbReference type="ChEBI" id="CHEBI:33384"/>
        <dbReference type="ChEBI" id="CHEBI:57305"/>
        <dbReference type="ChEBI" id="CHEBI:57453"/>
        <dbReference type="EC" id="2.1.2.1"/>
    </reaction>
</comment>
<comment type="cofactor">
    <cofactor evidence="1">
        <name>pyridoxal 5'-phosphate</name>
        <dbReference type="ChEBI" id="CHEBI:597326"/>
    </cofactor>
</comment>
<comment type="pathway">
    <text evidence="1">One-carbon metabolism; tetrahydrofolate interconversion.</text>
</comment>
<comment type="pathway">
    <text evidence="1">Amino-acid biosynthesis; glycine biosynthesis; glycine from L-serine: step 1/1.</text>
</comment>
<comment type="subunit">
    <text evidence="1">Homodimer.</text>
</comment>
<comment type="subcellular location">
    <subcellularLocation>
        <location evidence="1">Cytoplasm</location>
    </subcellularLocation>
</comment>
<comment type="similarity">
    <text evidence="1">Belongs to the SHMT family.</text>
</comment>
<proteinExistence type="inferred from homology"/>
<reference key="1">
    <citation type="submission" date="2008-01" db="EMBL/GenBank/DDBJ databases">
        <title>Complete sequence of chromosome of Caulobacter sp. K31.</title>
        <authorList>
            <consortium name="US DOE Joint Genome Institute"/>
            <person name="Copeland A."/>
            <person name="Lucas S."/>
            <person name="Lapidus A."/>
            <person name="Barry K."/>
            <person name="Glavina del Rio T."/>
            <person name="Dalin E."/>
            <person name="Tice H."/>
            <person name="Pitluck S."/>
            <person name="Bruce D."/>
            <person name="Goodwin L."/>
            <person name="Thompson L.S."/>
            <person name="Brettin T."/>
            <person name="Detter J.C."/>
            <person name="Han C."/>
            <person name="Schmutz J."/>
            <person name="Larimer F."/>
            <person name="Land M."/>
            <person name="Hauser L."/>
            <person name="Kyrpides N."/>
            <person name="Kim E."/>
            <person name="Stephens C."/>
            <person name="Richardson P."/>
        </authorList>
    </citation>
    <scope>NUCLEOTIDE SEQUENCE [LARGE SCALE GENOMIC DNA]</scope>
    <source>
        <strain>K31</strain>
    </source>
</reference>